<protein>
    <recommendedName>
        <fullName>Probable cysteine desulfurase</fullName>
        <ecNumber>2.8.1.7</ecNumber>
    </recommendedName>
</protein>
<name>CSD_XYLFA</name>
<sequence>MDRINTSAAPPTSPDWERLRTDFPLLQRHVHGKPLIYFDNANTAQKPQAVITATDTFYRRHNANISRAVHTLGTEATEAYEATRTALATLLNAPTHELVLCSGTTFAINLIAYSWALPRLRAGDVILVSRMEHHANIVPWQLIAERTGARIQVADILPNGTLDLDALHTLMTPQVKLLAITHVSNVLGTVNPIHDICRQARQRGITTVVDGSQAAPHRHIDIPAIGCDFYAITGHKLYGPTGTGALWARREHLHIMPPFLGGGEMIKEVSFDGTLFNTPPHKFEAGTPNIAGFIGLRAAVDYVRRIGIEQIETRETELLAHLTEELQKIDGMRLFGTAPNKAAVVSFMIEGTHAHDLATLLDLEGVAIRSGQHCAHPLLQYYGVTATCRASLAFYNTHEEIERFIAALLKVRKLLG</sequence>
<accession>Q9PDA6</accession>
<evidence type="ECO:0000250" key="1"/>
<evidence type="ECO:0000305" key="2"/>
<organism>
    <name type="scientific">Xylella fastidiosa (strain 9a5c)</name>
    <dbReference type="NCBI Taxonomy" id="160492"/>
    <lineage>
        <taxon>Bacteria</taxon>
        <taxon>Pseudomonadati</taxon>
        <taxon>Pseudomonadota</taxon>
        <taxon>Gammaproteobacteria</taxon>
        <taxon>Lysobacterales</taxon>
        <taxon>Lysobacteraceae</taxon>
        <taxon>Xylella</taxon>
    </lineage>
</organism>
<feature type="chain" id="PRO_0000150323" description="Probable cysteine desulfurase">
    <location>
        <begin position="1"/>
        <end position="416"/>
    </location>
</feature>
<feature type="active site" description="Cysteine persulfide intermediate" evidence="1">
    <location>
        <position position="374"/>
    </location>
</feature>
<feature type="modified residue" description="N6-(pyridoxal phosphate)lysine" evidence="1">
    <location>
        <position position="236"/>
    </location>
</feature>
<dbReference type="EC" id="2.8.1.7"/>
<dbReference type="EMBL" id="AE003849">
    <property type="protein sequence ID" value="AAF84282.1"/>
    <property type="molecule type" value="Genomic_DNA"/>
</dbReference>
<dbReference type="PIR" id="D82676">
    <property type="entry name" value="D82676"/>
</dbReference>
<dbReference type="RefSeq" id="WP_010893974.1">
    <property type="nucleotide sequence ID" value="NC_002488.3"/>
</dbReference>
<dbReference type="SMR" id="Q9PDA6"/>
<dbReference type="STRING" id="160492.XF_1473"/>
<dbReference type="KEGG" id="xfa:XF_1473"/>
<dbReference type="eggNOG" id="COG0520">
    <property type="taxonomic scope" value="Bacteria"/>
</dbReference>
<dbReference type="HOGENOM" id="CLU_003433_2_5_6"/>
<dbReference type="Proteomes" id="UP000000812">
    <property type="component" value="Chromosome"/>
</dbReference>
<dbReference type="GO" id="GO:0031071">
    <property type="term" value="F:cysteine desulfurase activity"/>
    <property type="evidence" value="ECO:0007669"/>
    <property type="project" value="UniProtKB-EC"/>
</dbReference>
<dbReference type="GO" id="GO:0030170">
    <property type="term" value="F:pyridoxal phosphate binding"/>
    <property type="evidence" value="ECO:0007669"/>
    <property type="project" value="InterPro"/>
</dbReference>
<dbReference type="GO" id="GO:0006534">
    <property type="term" value="P:cysteine metabolic process"/>
    <property type="evidence" value="ECO:0007669"/>
    <property type="project" value="InterPro"/>
</dbReference>
<dbReference type="CDD" id="cd06453">
    <property type="entry name" value="SufS_like"/>
    <property type="match status" value="1"/>
</dbReference>
<dbReference type="Gene3D" id="3.90.1150.10">
    <property type="entry name" value="Aspartate Aminotransferase, domain 1"/>
    <property type="match status" value="1"/>
</dbReference>
<dbReference type="Gene3D" id="3.40.640.10">
    <property type="entry name" value="Type I PLP-dependent aspartate aminotransferase-like (Major domain)"/>
    <property type="match status" value="1"/>
</dbReference>
<dbReference type="InterPro" id="IPR000192">
    <property type="entry name" value="Aminotrans_V_dom"/>
</dbReference>
<dbReference type="InterPro" id="IPR020578">
    <property type="entry name" value="Aminotrans_V_PyrdxlP_BS"/>
</dbReference>
<dbReference type="InterPro" id="IPR010970">
    <property type="entry name" value="Cys_dSase_SufS"/>
</dbReference>
<dbReference type="InterPro" id="IPR016454">
    <property type="entry name" value="Cysteine_dSase"/>
</dbReference>
<dbReference type="InterPro" id="IPR015424">
    <property type="entry name" value="PyrdxlP-dep_Trfase"/>
</dbReference>
<dbReference type="InterPro" id="IPR015421">
    <property type="entry name" value="PyrdxlP-dep_Trfase_major"/>
</dbReference>
<dbReference type="InterPro" id="IPR015422">
    <property type="entry name" value="PyrdxlP-dep_Trfase_small"/>
</dbReference>
<dbReference type="NCBIfam" id="TIGR01979">
    <property type="entry name" value="sufS"/>
    <property type="match status" value="1"/>
</dbReference>
<dbReference type="PANTHER" id="PTHR43586">
    <property type="entry name" value="CYSTEINE DESULFURASE"/>
    <property type="match status" value="1"/>
</dbReference>
<dbReference type="PANTHER" id="PTHR43586:SF8">
    <property type="entry name" value="CYSTEINE DESULFURASE 1, CHLOROPLASTIC"/>
    <property type="match status" value="1"/>
</dbReference>
<dbReference type="Pfam" id="PF00266">
    <property type="entry name" value="Aminotran_5"/>
    <property type="match status" value="1"/>
</dbReference>
<dbReference type="PIRSF" id="PIRSF005572">
    <property type="entry name" value="NifS"/>
    <property type="match status" value="1"/>
</dbReference>
<dbReference type="SUPFAM" id="SSF53383">
    <property type="entry name" value="PLP-dependent transferases"/>
    <property type="match status" value="1"/>
</dbReference>
<dbReference type="PROSITE" id="PS00595">
    <property type="entry name" value="AA_TRANSFER_CLASS_5"/>
    <property type="match status" value="1"/>
</dbReference>
<reference key="1">
    <citation type="journal article" date="2000" name="Nature">
        <title>The genome sequence of the plant pathogen Xylella fastidiosa.</title>
        <authorList>
            <person name="Simpson A.J.G."/>
            <person name="Reinach F.C."/>
            <person name="Arruda P."/>
            <person name="Abreu F.A."/>
            <person name="Acencio M."/>
            <person name="Alvarenga R."/>
            <person name="Alves L.M.C."/>
            <person name="Araya J.E."/>
            <person name="Baia G.S."/>
            <person name="Baptista C.S."/>
            <person name="Barros M.H."/>
            <person name="Bonaccorsi E.D."/>
            <person name="Bordin S."/>
            <person name="Bove J.M."/>
            <person name="Briones M.R.S."/>
            <person name="Bueno M.R.P."/>
            <person name="Camargo A.A."/>
            <person name="Camargo L.E.A."/>
            <person name="Carraro D.M."/>
            <person name="Carrer H."/>
            <person name="Colauto N.B."/>
            <person name="Colombo C."/>
            <person name="Costa F.F."/>
            <person name="Costa M.C.R."/>
            <person name="Costa-Neto C.M."/>
            <person name="Coutinho L.L."/>
            <person name="Cristofani M."/>
            <person name="Dias-Neto E."/>
            <person name="Docena C."/>
            <person name="El-Dorry H."/>
            <person name="Facincani A.P."/>
            <person name="Ferreira A.J.S."/>
            <person name="Ferreira V.C.A."/>
            <person name="Ferro J.A."/>
            <person name="Fraga J.S."/>
            <person name="Franca S.C."/>
            <person name="Franco M.C."/>
            <person name="Frohme M."/>
            <person name="Furlan L.R."/>
            <person name="Garnier M."/>
            <person name="Goldman G.H."/>
            <person name="Goldman M.H.S."/>
            <person name="Gomes S.L."/>
            <person name="Gruber A."/>
            <person name="Ho P.L."/>
            <person name="Hoheisel J.D."/>
            <person name="Junqueira M.L."/>
            <person name="Kemper E.L."/>
            <person name="Kitajima J.P."/>
            <person name="Krieger J.E."/>
            <person name="Kuramae E.E."/>
            <person name="Laigret F."/>
            <person name="Lambais M.R."/>
            <person name="Leite L.C.C."/>
            <person name="Lemos E.G.M."/>
            <person name="Lemos M.V.F."/>
            <person name="Lopes S.A."/>
            <person name="Lopes C.R."/>
            <person name="Machado J.A."/>
            <person name="Machado M.A."/>
            <person name="Madeira A.M.B.N."/>
            <person name="Madeira H.M.F."/>
            <person name="Marino C.L."/>
            <person name="Marques M.V."/>
            <person name="Martins E.A.L."/>
            <person name="Martins E.M.F."/>
            <person name="Matsukuma A.Y."/>
            <person name="Menck C.F.M."/>
            <person name="Miracca E.C."/>
            <person name="Miyaki C.Y."/>
            <person name="Monteiro-Vitorello C.B."/>
            <person name="Moon D.H."/>
            <person name="Nagai M.A."/>
            <person name="Nascimento A.L.T.O."/>
            <person name="Netto L.E.S."/>
            <person name="Nhani A. Jr."/>
            <person name="Nobrega F.G."/>
            <person name="Nunes L.R."/>
            <person name="Oliveira M.A."/>
            <person name="de Oliveira M.C."/>
            <person name="de Oliveira R.C."/>
            <person name="Palmieri D.A."/>
            <person name="Paris A."/>
            <person name="Peixoto B.R."/>
            <person name="Pereira G.A.G."/>
            <person name="Pereira H.A. Jr."/>
            <person name="Pesquero J.B."/>
            <person name="Quaggio R.B."/>
            <person name="Roberto P.G."/>
            <person name="Rodrigues V."/>
            <person name="de Rosa A.J.M."/>
            <person name="de Rosa V.E. Jr."/>
            <person name="de Sa R.G."/>
            <person name="Santelli R.V."/>
            <person name="Sawasaki H.E."/>
            <person name="da Silva A.C.R."/>
            <person name="da Silva A.M."/>
            <person name="da Silva F.R."/>
            <person name="Silva W.A. Jr."/>
            <person name="da Silveira J.F."/>
            <person name="Silvestri M.L.Z."/>
            <person name="Siqueira W.J."/>
            <person name="de Souza A.A."/>
            <person name="de Souza A.P."/>
            <person name="Terenzi M.F."/>
            <person name="Truffi D."/>
            <person name="Tsai S.M."/>
            <person name="Tsuhako M.H."/>
            <person name="Vallada H."/>
            <person name="Van Sluys M.A."/>
            <person name="Verjovski-Almeida S."/>
            <person name="Vettore A.L."/>
            <person name="Zago M.A."/>
            <person name="Zatz M."/>
            <person name="Meidanis J."/>
            <person name="Setubal J.C."/>
        </authorList>
    </citation>
    <scope>NUCLEOTIDE SEQUENCE [LARGE SCALE GENOMIC DNA]</scope>
    <source>
        <strain>9a5c</strain>
    </source>
</reference>
<comment type="function">
    <text evidence="1">Catalyzes the removal of elemental sulfur and selenium atoms from L-cysteine, L-cystine, L-selenocysteine, and L-selenocystine to produce L-alanine.</text>
</comment>
<comment type="catalytic activity">
    <reaction>
        <text>(sulfur carrier)-H + L-cysteine = (sulfur carrier)-SH + L-alanine</text>
        <dbReference type="Rhea" id="RHEA:43892"/>
        <dbReference type="Rhea" id="RHEA-COMP:14737"/>
        <dbReference type="Rhea" id="RHEA-COMP:14739"/>
        <dbReference type="ChEBI" id="CHEBI:29917"/>
        <dbReference type="ChEBI" id="CHEBI:35235"/>
        <dbReference type="ChEBI" id="CHEBI:57972"/>
        <dbReference type="ChEBI" id="CHEBI:64428"/>
        <dbReference type="EC" id="2.8.1.7"/>
    </reaction>
</comment>
<comment type="cofactor">
    <cofactor evidence="1">
        <name>pyridoxal 5'-phosphate</name>
        <dbReference type="ChEBI" id="CHEBI:597326"/>
    </cofactor>
</comment>
<comment type="similarity">
    <text evidence="2">Belongs to the class-V pyridoxal-phosphate-dependent aminotransferase family. Csd subfamily.</text>
</comment>
<keyword id="KW-0663">Pyridoxal phosphate</keyword>
<keyword id="KW-0808">Transferase</keyword>
<proteinExistence type="inferred from homology"/>
<gene>
    <name type="primary">csd</name>
    <name type="ordered locus">XF_1473</name>
</gene>